<evidence type="ECO:0000250" key="1"/>
<evidence type="ECO:0000255" key="2"/>
<evidence type="ECO:0000305" key="3"/>
<feature type="signal peptide" evidence="2">
    <location>
        <begin position="1"/>
        <end position="28"/>
    </location>
</feature>
<feature type="chain" id="PRO_0000367369" description="GDSL esterase/lipase At1g71250">
    <location>
        <begin position="29"/>
        <end position="374"/>
    </location>
</feature>
<feature type="active site" description="Nucleophile" evidence="1">
    <location>
        <position position="48"/>
    </location>
</feature>
<feature type="active site" evidence="1">
    <location>
        <position position="338"/>
    </location>
</feature>
<feature type="active site" evidence="1">
    <location>
        <position position="341"/>
    </location>
</feature>
<feature type="glycosylation site" description="N-linked (GlcNAc...) asparagine" evidence="2">
    <location>
        <position position="162"/>
    </location>
</feature>
<organism>
    <name type="scientific">Arabidopsis thaliana</name>
    <name type="common">Mouse-ear cress</name>
    <dbReference type="NCBI Taxonomy" id="3702"/>
    <lineage>
        <taxon>Eukaryota</taxon>
        <taxon>Viridiplantae</taxon>
        <taxon>Streptophyta</taxon>
        <taxon>Embryophyta</taxon>
        <taxon>Tracheophyta</taxon>
        <taxon>Spermatophyta</taxon>
        <taxon>Magnoliopsida</taxon>
        <taxon>eudicotyledons</taxon>
        <taxon>Gunneridae</taxon>
        <taxon>Pentapetalae</taxon>
        <taxon>rosids</taxon>
        <taxon>malvids</taxon>
        <taxon>Brassicales</taxon>
        <taxon>Brassicaceae</taxon>
        <taxon>Camelineae</taxon>
        <taxon>Arabidopsis</taxon>
    </lineage>
</organism>
<sequence length="374" mass="41192">MNTNRKKMKVHIGGYVLILALTVSVILQQPELVTGQARVPAMFVLGDSLVDAGNNNFLQTVARANFLPYGIDMNYQPTGRFSNGLTFIDLLARLLEIPSPPPFADPTTSGNRILQGVNYASAAAGILDVSGYNYGGRFSLNQQMVNLETTLSQLRTMMSPQNFTDYLARSLVVLVFGSNDYINNYLMPNLYDSSIRFRPPDFANLLLSQYARQLLTLYSLGLRKIFIPGVAPLGCIPNQRARGISPPDRCVDSVNQILGTFNQGLKSLVDQLNQRSPGAIYVYGNTYSAIGDILNNPAAYGFSVVDRACCGIGRNQGQITCLPLQTPCPNRNQYVFWDAFHPTQTANSILARRAFYGPPSDAYPVNVQQMTLLH</sequence>
<name>GDL28_ARATH</name>
<gene>
    <name type="ordered locus">At1g71250</name>
    <name type="ORF">F3I17.10</name>
</gene>
<reference key="1">
    <citation type="journal article" date="2000" name="Nature">
        <title>Sequence and analysis of chromosome 1 of the plant Arabidopsis thaliana.</title>
        <authorList>
            <person name="Theologis A."/>
            <person name="Ecker J.R."/>
            <person name="Palm C.J."/>
            <person name="Federspiel N.A."/>
            <person name="Kaul S."/>
            <person name="White O."/>
            <person name="Alonso J."/>
            <person name="Altafi H."/>
            <person name="Araujo R."/>
            <person name="Bowman C.L."/>
            <person name="Brooks S.Y."/>
            <person name="Buehler E."/>
            <person name="Chan A."/>
            <person name="Chao Q."/>
            <person name="Chen H."/>
            <person name="Cheuk R.F."/>
            <person name="Chin C.W."/>
            <person name="Chung M.K."/>
            <person name="Conn L."/>
            <person name="Conway A.B."/>
            <person name="Conway A.R."/>
            <person name="Creasy T.H."/>
            <person name="Dewar K."/>
            <person name="Dunn P."/>
            <person name="Etgu P."/>
            <person name="Feldblyum T.V."/>
            <person name="Feng J.-D."/>
            <person name="Fong B."/>
            <person name="Fujii C.Y."/>
            <person name="Gill J.E."/>
            <person name="Goldsmith A.D."/>
            <person name="Haas B."/>
            <person name="Hansen N.F."/>
            <person name="Hughes B."/>
            <person name="Huizar L."/>
            <person name="Hunter J.L."/>
            <person name="Jenkins J."/>
            <person name="Johnson-Hopson C."/>
            <person name="Khan S."/>
            <person name="Khaykin E."/>
            <person name="Kim C.J."/>
            <person name="Koo H.L."/>
            <person name="Kremenetskaia I."/>
            <person name="Kurtz D.B."/>
            <person name="Kwan A."/>
            <person name="Lam B."/>
            <person name="Langin-Hooper S."/>
            <person name="Lee A."/>
            <person name="Lee J.M."/>
            <person name="Lenz C.A."/>
            <person name="Li J.H."/>
            <person name="Li Y.-P."/>
            <person name="Lin X."/>
            <person name="Liu S.X."/>
            <person name="Liu Z.A."/>
            <person name="Luros J.S."/>
            <person name="Maiti R."/>
            <person name="Marziali A."/>
            <person name="Militscher J."/>
            <person name="Miranda M."/>
            <person name="Nguyen M."/>
            <person name="Nierman W.C."/>
            <person name="Osborne B.I."/>
            <person name="Pai G."/>
            <person name="Peterson J."/>
            <person name="Pham P.K."/>
            <person name="Rizzo M."/>
            <person name="Rooney T."/>
            <person name="Rowley D."/>
            <person name="Sakano H."/>
            <person name="Salzberg S.L."/>
            <person name="Schwartz J.R."/>
            <person name="Shinn P."/>
            <person name="Southwick A.M."/>
            <person name="Sun H."/>
            <person name="Tallon L.J."/>
            <person name="Tambunga G."/>
            <person name="Toriumi M.J."/>
            <person name="Town C.D."/>
            <person name="Utterback T."/>
            <person name="Van Aken S."/>
            <person name="Vaysberg M."/>
            <person name="Vysotskaia V.S."/>
            <person name="Walker M."/>
            <person name="Wu D."/>
            <person name="Yu G."/>
            <person name="Fraser C.M."/>
            <person name="Venter J.C."/>
            <person name="Davis R.W."/>
        </authorList>
    </citation>
    <scope>NUCLEOTIDE SEQUENCE [LARGE SCALE GENOMIC DNA]</scope>
    <source>
        <strain>cv. Columbia</strain>
    </source>
</reference>
<reference key="2">
    <citation type="journal article" date="2017" name="Plant J.">
        <title>Araport11: a complete reannotation of the Arabidopsis thaliana reference genome.</title>
        <authorList>
            <person name="Cheng C.Y."/>
            <person name="Krishnakumar V."/>
            <person name="Chan A.P."/>
            <person name="Thibaud-Nissen F."/>
            <person name="Schobel S."/>
            <person name="Town C.D."/>
        </authorList>
    </citation>
    <scope>GENOME REANNOTATION</scope>
    <source>
        <strain>cv. Columbia</strain>
    </source>
</reference>
<reference key="3">
    <citation type="journal article" date="2002" name="Science">
        <title>Functional annotation of a full-length Arabidopsis cDNA collection.</title>
        <authorList>
            <person name="Seki M."/>
            <person name="Narusaka M."/>
            <person name="Kamiya A."/>
            <person name="Ishida J."/>
            <person name="Satou M."/>
            <person name="Sakurai T."/>
            <person name="Nakajima M."/>
            <person name="Enju A."/>
            <person name="Akiyama K."/>
            <person name="Oono Y."/>
            <person name="Muramatsu M."/>
            <person name="Hayashizaki Y."/>
            <person name="Kawai J."/>
            <person name="Carninci P."/>
            <person name="Itoh M."/>
            <person name="Ishii Y."/>
            <person name="Arakawa T."/>
            <person name="Shibata K."/>
            <person name="Shinagawa A."/>
            <person name="Shinozaki K."/>
        </authorList>
    </citation>
    <scope>NUCLEOTIDE SEQUENCE [LARGE SCALE MRNA]</scope>
    <source>
        <strain>cv. Columbia</strain>
    </source>
</reference>
<reference key="4">
    <citation type="journal article" date="2003" name="Science">
        <title>Empirical analysis of transcriptional activity in the Arabidopsis genome.</title>
        <authorList>
            <person name="Yamada K."/>
            <person name="Lim J."/>
            <person name="Dale J.M."/>
            <person name="Chen H."/>
            <person name="Shinn P."/>
            <person name="Palm C.J."/>
            <person name="Southwick A.M."/>
            <person name="Wu H.C."/>
            <person name="Kim C.J."/>
            <person name="Nguyen M."/>
            <person name="Pham P.K."/>
            <person name="Cheuk R.F."/>
            <person name="Karlin-Newmann G."/>
            <person name="Liu S.X."/>
            <person name="Lam B."/>
            <person name="Sakano H."/>
            <person name="Wu T."/>
            <person name="Yu G."/>
            <person name="Miranda M."/>
            <person name="Quach H.L."/>
            <person name="Tripp M."/>
            <person name="Chang C.H."/>
            <person name="Lee J.M."/>
            <person name="Toriumi M.J."/>
            <person name="Chan M.M."/>
            <person name="Tang C.C."/>
            <person name="Onodera C.S."/>
            <person name="Deng J.M."/>
            <person name="Akiyama K."/>
            <person name="Ansari Y."/>
            <person name="Arakawa T."/>
            <person name="Banh J."/>
            <person name="Banno F."/>
            <person name="Bowser L."/>
            <person name="Brooks S.Y."/>
            <person name="Carninci P."/>
            <person name="Chao Q."/>
            <person name="Choy N."/>
            <person name="Enju A."/>
            <person name="Goldsmith A.D."/>
            <person name="Gurjal M."/>
            <person name="Hansen N.F."/>
            <person name="Hayashizaki Y."/>
            <person name="Johnson-Hopson C."/>
            <person name="Hsuan V.W."/>
            <person name="Iida K."/>
            <person name="Karnes M."/>
            <person name="Khan S."/>
            <person name="Koesema E."/>
            <person name="Ishida J."/>
            <person name="Jiang P.X."/>
            <person name="Jones T."/>
            <person name="Kawai J."/>
            <person name="Kamiya A."/>
            <person name="Meyers C."/>
            <person name="Nakajima M."/>
            <person name="Narusaka M."/>
            <person name="Seki M."/>
            <person name="Sakurai T."/>
            <person name="Satou M."/>
            <person name="Tamse R."/>
            <person name="Vaysberg M."/>
            <person name="Wallender E.K."/>
            <person name="Wong C."/>
            <person name="Yamamura Y."/>
            <person name="Yuan S."/>
            <person name="Shinozaki K."/>
            <person name="Davis R.W."/>
            <person name="Theologis A."/>
            <person name="Ecker J.R."/>
        </authorList>
    </citation>
    <scope>NUCLEOTIDE SEQUENCE [LARGE SCALE MRNA]</scope>
    <source>
        <strain>cv. Columbia</strain>
    </source>
</reference>
<reference key="5">
    <citation type="journal article" date="2004" name="Prog. Lipid Res.">
        <title>GDSL family of serine esterases/lipases.</title>
        <authorList>
            <person name="Akoh C.C."/>
            <person name="Lee G.-C."/>
            <person name="Liaw Y.-C."/>
            <person name="Huang T.-H."/>
            <person name="Shaw J.-F."/>
        </authorList>
    </citation>
    <scope>REVIEW</scope>
</reference>
<reference key="6">
    <citation type="journal article" date="2008" name="Pak. J. Biol. Sci.">
        <title>Sequence analysis of GDSL lipase gene family in Arabidopsis thaliana.</title>
        <authorList>
            <person name="Ling H."/>
        </authorList>
    </citation>
    <scope>GENE FAMILY</scope>
</reference>
<comment type="subcellular location">
    <subcellularLocation>
        <location evidence="3">Secreted</location>
    </subcellularLocation>
</comment>
<comment type="similarity">
    <text evidence="3">Belongs to the 'GDSL' lipolytic enzyme family.</text>
</comment>
<protein>
    <recommendedName>
        <fullName>GDSL esterase/lipase At1g71250</fullName>
        <ecNumber>3.1.1.-</ecNumber>
    </recommendedName>
    <alternativeName>
        <fullName>Extracellular lipase At1g71250</fullName>
    </alternativeName>
</protein>
<dbReference type="EC" id="3.1.1.-"/>
<dbReference type="EMBL" id="AC016162">
    <property type="protein sequence ID" value="AAG51891.1"/>
    <property type="molecule type" value="Genomic_DNA"/>
</dbReference>
<dbReference type="EMBL" id="CP002684">
    <property type="protein sequence ID" value="AEE35180.1"/>
    <property type="molecule type" value="Genomic_DNA"/>
</dbReference>
<dbReference type="EMBL" id="AK117368">
    <property type="protein sequence ID" value="BAC42038.1"/>
    <property type="molecule type" value="mRNA"/>
</dbReference>
<dbReference type="EMBL" id="BT005325">
    <property type="protein sequence ID" value="AAO63389.1"/>
    <property type="molecule type" value="mRNA"/>
</dbReference>
<dbReference type="PIR" id="B96737">
    <property type="entry name" value="B96737"/>
</dbReference>
<dbReference type="RefSeq" id="NP_177281.1">
    <property type="nucleotide sequence ID" value="NM_105794.4"/>
</dbReference>
<dbReference type="SMR" id="Q9FVV1"/>
<dbReference type="FunCoup" id="Q9FVV1">
    <property type="interactions" value="160"/>
</dbReference>
<dbReference type="STRING" id="3702.Q9FVV1"/>
<dbReference type="GlyGen" id="Q9FVV1">
    <property type="glycosylation" value="1 site"/>
</dbReference>
<dbReference type="PaxDb" id="3702-AT1G71250.1"/>
<dbReference type="ProteomicsDB" id="224752"/>
<dbReference type="EnsemblPlants" id="AT1G71250.1">
    <property type="protein sequence ID" value="AT1G71250.1"/>
    <property type="gene ID" value="AT1G71250"/>
</dbReference>
<dbReference type="GeneID" id="843466"/>
<dbReference type="Gramene" id="AT1G71250.1">
    <property type="protein sequence ID" value="AT1G71250.1"/>
    <property type="gene ID" value="AT1G71250"/>
</dbReference>
<dbReference type="KEGG" id="ath:AT1G71250"/>
<dbReference type="Araport" id="AT1G71250"/>
<dbReference type="TAIR" id="AT1G71250"/>
<dbReference type="eggNOG" id="ENOG502QQWI">
    <property type="taxonomic scope" value="Eukaryota"/>
</dbReference>
<dbReference type="HOGENOM" id="CLU_015101_0_0_1"/>
<dbReference type="InParanoid" id="Q9FVV1"/>
<dbReference type="OMA" id="QMLGTFN"/>
<dbReference type="PhylomeDB" id="Q9FVV1"/>
<dbReference type="BioCyc" id="ARA:AT1G71250-MONOMER"/>
<dbReference type="PRO" id="PR:Q9FVV1"/>
<dbReference type="Proteomes" id="UP000006548">
    <property type="component" value="Chromosome 1"/>
</dbReference>
<dbReference type="ExpressionAtlas" id="Q9FVV1">
    <property type="expression patterns" value="baseline and differential"/>
</dbReference>
<dbReference type="GO" id="GO:0005576">
    <property type="term" value="C:extracellular region"/>
    <property type="evidence" value="ECO:0007669"/>
    <property type="project" value="UniProtKB-SubCell"/>
</dbReference>
<dbReference type="GO" id="GO:0016298">
    <property type="term" value="F:lipase activity"/>
    <property type="evidence" value="ECO:0007669"/>
    <property type="project" value="InterPro"/>
</dbReference>
<dbReference type="GO" id="GO:0016042">
    <property type="term" value="P:lipid catabolic process"/>
    <property type="evidence" value="ECO:0007669"/>
    <property type="project" value="UniProtKB-KW"/>
</dbReference>
<dbReference type="CDD" id="cd01837">
    <property type="entry name" value="SGNH_plant_lipase_like"/>
    <property type="match status" value="1"/>
</dbReference>
<dbReference type="Gene3D" id="3.40.50.1110">
    <property type="entry name" value="SGNH hydrolase"/>
    <property type="match status" value="1"/>
</dbReference>
<dbReference type="InterPro" id="IPR001087">
    <property type="entry name" value="GDSL"/>
</dbReference>
<dbReference type="InterPro" id="IPR051238">
    <property type="entry name" value="GDSL_esterase/lipase"/>
</dbReference>
<dbReference type="InterPro" id="IPR008265">
    <property type="entry name" value="Lipase_GDSL_AS"/>
</dbReference>
<dbReference type="InterPro" id="IPR036514">
    <property type="entry name" value="SGNH_hydro_sf"/>
</dbReference>
<dbReference type="InterPro" id="IPR035669">
    <property type="entry name" value="SGNH_plant_lipase-like"/>
</dbReference>
<dbReference type="PANTHER" id="PTHR45650:SF8">
    <property type="entry name" value="GDSL ESTERASE_LIPASE"/>
    <property type="match status" value="1"/>
</dbReference>
<dbReference type="PANTHER" id="PTHR45650">
    <property type="entry name" value="GDSL-LIKE LIPASE/ACYLHYDROLASE-RELATED"/>
    <property type="match status" value="1"/>
</dbReference>
<dbReference type="Pfam" id="PF00657">
    <property type="entry name" value="Lipase_GDSL"/>
    <property type="match status" value="1"/>
</dbReference>
<dbReference type="SUPFAM" id="SSF52266">
    <property type="entry name" value="SGNH hydrolase"/>
    <property type="match status" value="1"/>
</dbReference>
<dbReference type="PROSITE" id="PS01098">
    <property type="entry name" value="LIPASE_GDSL_SER"/>
    <property type="match status" value="1"/>
</dbReference>
<accession>Q9FVV1</accession>
<proteinExistence type="evidence at transcript level"/>
<keyword id="KW-0325">Glycoprotein</keyword>
<keyword id="KW-0378">Hydrolase</keyword>
<keyword id="KW-0442">Lipid degradation</keyword>
<keyword id="KW-0443">Lipid metabolism</keyword>
<keyword id="KW-1185">Reference proteome</keyword>
<keyword id="KW-0964">Secreted</keyword>
<keyword id="KW-0732">Signal</keyword>